<dbReference type="EMBL" id="AP009369">
    <property type="protein sequence ID" value="BAF50059.1"/>
    <property type="molecule type" value="Genomic_DNA"/>
</dbReference>
<dbReference type="RefSeq" id="YP_001123235.1">
    <property type="nucleotide sequence ID" value="NC_009268.1"/>
</dbReference>
<dbReference type="SMR" id="A4QK54"/>
<dbReference type="GeneID" id="4962621"/>
<dbReference type="GO" id="GO:0009507">
    <property type="term" value="C:chloroplast"/>
    <property type="evidence" value="ECO:0007669"/>
    <property type="project" value="UniProtKB-SubCell"/>
</dbReference>
<dbReference type="GO" id="GO:0022625">
    <property type="term" value="C:cytosolic large ribosomal subunit"/>
    <property type="evidence" value="ECO:0007669"/>
    <property type="project" value="TreeGrafter"/>
</dbReference>
<dbReference type="GO" id="GO:0070180">
    <property type="term" value="F:large ribosomal subunit rRNA binding"/>
    <property type="evidence" value="ECO:0007669"/>
    <property type="project" value="TreeGrafter"/>
</dbReference>
<dbReference type="GO" id="GO:0003735">
    <property type="term" value="F:structural constituent of ribosome"/>
    <property type="evidence" value="ECO:0007669"/>
    <property type="project" value="InterPro"/>
</dbReference>
<dbReference type="GO" id="GO:0006412">
    <property type="term" value="P:translation"/>
    <property type="evidence" value="ECO:0007669"/>
    <property type="project" value="UniProtKB-UniRule"/>
</dbReference>
<dbReference type="CDD" id="cd00337">
    <property type="entry name" value="Ribosomal_uL14"/>
    <property type="match status" value="1"/>
</dbReference>
<dbReference type="FunFam" id="2.40.150.20:FF:000002">
    <property type="entry name" value="50S ribosomal protein L14, chloroplastic"/>
    <property type="match status" value="1"/>
</dbReference>
<dbReference type="Gene3D" id="2.40.150.20">
    <property type="entry name" value="Ribosomal protein L14"/>
    <property type="match status" value="1"/>
</dbReference>
<dbReference type="HAMAP" id="MF_01367">
    <property type="entry name" value="Ribosomal_uL14"/>
    <property type="match status" value="1"/>
</dbReference>
<dbReference type="InterPro" id="IPR000218">
    <property type="entry name" value="Ribosomal_uL14"/>
</dbReference>
<dbReference type="InterPro" id="IPR005745">
    <property type="entry name" value="Ribosomal_uL14_bac-type"/>
</dbReference>
<dbReference type="InterPro" id="IPR019972">
    <property type="entry name" value="Ribosomal_uL14_CS"/>
</dbReference>
<dbReference type="InterPro" id="IPR036853">
    <property type="entry name" value="Ribosomal_uL14_sf"/>
</dbReference>
<dbReference type="NCBIfam" id="TIGR01067">
    <property type="entry name" value="rplN_bact"/>
    <property type="match status" value="1"/>
</dbReference>
<dbReference type="PANTHER" id="PTHR11761">
    <property type="entry name" value="50S/60S RIBOSOMAL PROTEIN L14/L23"/>
    <property type="match status" value="1"/>
</dbReference>
<dbReference type="PANTHER" id="PTHR11761:SF3">
    <property type="entry name" value="LARGE RIBOSOMAL SUBUNIT PROTEIN UL14M"/>
    <property type="match status" value="1"/>
</dbReference>
<dbReference type="Pfam" id="PF00238">
    <property type="entry name" value="Ribosomal_L14"/>
    <property type="match status" value="1"/>
</dbReference>
<dbReference type="SMART" id="SM01374">
    <property type="entry name" value="Ribosomal_L14"/>
    <property type="match status" value="1"/>
</dbReference>
<dbReference type="SUPFAM" id="SSF50193">
    <property type="entry name" value="Ribosomal protein L14"/>
    <property type="match status" value="1"/>
</dbReference>
<dbReference type="PROSITE" id="PS00049">
    <property type="entry name" value="RIBOSOMAL_L14"/>
    <property type="match status" value="1"/>
</dbReference>
<keyword id="KW-0150">Chloroplast</keyword>
<keyword id="KW-0934">Plastid</keyword>
<keyword id="KW-0687">Ribonucleoprotein</keyword>
<keyword id="KW-0689">Ribosomal protein</keyword>
<keyword id="KW-0694">RNA-binding</keyword>
<keyword id="KW-0699">rRNA-binding</keyword>
<comment type="function">
    <text evidence="1">Binds to 23S rRNA.</text>
</comment>
<comment type="subunit">
    <text evidence="1">Part of the 50S ribosomal subunit.</text>
</comment>
<comment type="subcellular location">
    <subcellularLocation>
        <location>Plastid</location>
        <location>Chloroplast</location>
    </subcellularLocation>
</comment>
<comment type="similarity">
    <text evidence="1">Belongs to the universal ribosomal protein uL14 family.</text>
</comment>
<proteinExistence type="inferred from homology"/>
<organism>
    <name type="scientific">Arabis hirsuta</name>
    <name type="common">Hairy rock-cress</name>
    <name type="synonym">Turritis hirsuta</name>
    <dbReference type="NCBI Taxonomy" id="78191"/>
    <lineage>
        <taxon>Eukaryota</taxon>
        <taxon>Viridiplantae</taxon>
        <taxon>Streptophyta</taxon>
        <taxon>Embryophyta</taxon>
        <taxon>Tracheophyta</taxon>
        <taxon>Spermatophyta</taxon>
        <taxon>Magnoliopsida</taxon>
        <taxon>eudicotyledons</taxon>
        <taxon>Gunneridae</taxon>
        <taxon>Pentapetalae</taxon>
        <taxon>rosids</taxon>
        <taxon>malvids</taxon>
        <taxon>Brassicales</taxon>
        <taxon>Brassicaceae</taxon>
        <taxon>Arabideae</taxon>
        <taxon>Arabis</taxon>
    </lineage>
</organism>
<sequence length="122" mass="13568">MIQPQTYLNVADNSGARELMCIRIIGASNRRYAHIGDVIVAVIKEAIPNSPLERSEVIRAVIVRTCKELKRNNGTIIRYDDNAAVVIDQEGNPKGTRVFGAIPRELRQLNFTKIVSLAPEVL</sequence>
<geneLocation type="chloroplast"/>
<accession>A4QK54</accession>
<evidence type="ECO:0000255" key="1">
    <source>
        <dbReference type="HAMAP-Rule" id="MF_01367"/>
    </source>
</evidence>
<evidence type="ECO:0000305" key="2"/>
<gene>
    <name evidence="1" type="primary">rpl14</name>
</gene>
<reference key="1">
    <citation type="submission" date="2007-03" db="EMBL/GenBank/DDBJ databases">
        <title>Sequencing analysis of Arabis hirsuta chloroplast DNA.</title>
        <authorList>
            <person name="Hosouchi T."/>
            <person name="Tsuruoka H."/>
            <person name="Kotani H."/>
        </authorList>
    </citation>
    <scope>NUCLEOTIDE SEQUENCE [LARGE SCALE GENOMIC DNA]</scope>
</reference>
<feature type="chain" id="PRO_0000355860" description="Large ribosomal subunit protein uL14c">
    <location>
        <begin position="1"/>
        <end position="122"/>
    </location>
</feature>
<name>RK14_ARAHI</name>
<protein>
    <recommendedName>
        <fullName evidence="1">Large ribosomal subunit protein uL14c</fullName>
    </recommendedName>
    <alternativeName>
        <fullName evidence="2">50S ribosomal protein L14, chloroplastic</fullName>
    </alternativeName>
</protein>